<evidence type="ECO:0000255" key="1">
    <source>
        <dbReference type="HAMAP-Rule" id="MF_01503"/>
    </source>
</evidence>
<dbReference type="EMBL" id="AP008230">
    <property type="protein sequence ID" value="BAE84519.1"/>
    <property type="molecule type" value="Genomic_DNA"/>
</dbReference>
<dbReference type="SMR" id="Q24TX3"/>
<dbReference type="STRING" id="138119.DSY2730"/>
<dbReference type="KEGG" id="dsy:DSY2730"/>
<dbReference type="eggNOG" id="COG2052">
    <property type="taxonomic scope" value="Bacteria"/>
</dbReference>
<dbReference type="HOGENOM" id="CLU_165326_0_0_9"/>
<dbReference type="Proteomes" id="UP000001946">
    <property type="component" value="Chromosome"/>
</dbReference>
<dbReference type="HAMAP" id="MF_01503">
    <property type="entry name" value="RemA"/>
    <property type="match status" value="1"/>
</dbReference>
<dbReference type="InterPro" id="IPR007169">
    <property type="entry name" value="RemA-like"/>
</dbReference>
<dbReference type="NCBIfam" id="NF046064">
    <property type="entry name" value="MtxBflmRegRemA"/>
    <property type="match status" value="1"/>
</dbReference>
<dbReference type="NCBIfam" id="NF003315">
    <property type="entry name" value="PRK04323.1"/>
    <property type="match status" value="1"/>
</dbReference>
<dbReference type="PANTHER" id="PTHR38449:SF1">
    <property type="entry name" value="REGULATORY PROTEIN SSL2874-RELATED"/>
    <property type="match status" value="1"/>
</dbReference>
<dbReference type="PANTHER" id="PTHR38449">
    <property type="entry name" value="REGULATORY PROTEIN TM_1690-RELATED"/>
    <property type="match status" value="1"/>
</dbReference>
<dbReference type="Pfam" id="PF04025">
    <property type="entry name" value="RemA-like"/>
    <property type="match status" value="1"/>
</dbReference>
<organism>
    <name type="scientific">Desulfitobacterium hafniense (strain Y51)</name>
    <dbReference type="NCBI Taxonomy" id="138119"/>
    <lineage>
        <taxon>Bacteria</taxon>
        <taxon>Bacillati</taxon>
        <taxon>Bacillota</taxon>
        <taxon>Clostridia</taxon>
        <taxon>Eubacteriales</taxon>
        <taxon>Desulfitobacteriaceae</taxon>
        <taxon>Desulfitobacterium</taxon>
    </lineage>
</organism>
<comment type="similarity">
    <text evidence="1">Belongs to the RemA family.</text>
</comment>
<gene>
    <name type="ordered locus">DSY2730</name>
</gene>
<proteinExistence type="inferred from homology"/>
<feature type="chain" id="PRO_0000245633" description="Putative regulatory protein DSY2730">
    <location>
        <begin position="1"/>
        <end position="91"/>
    </location>
</feature>
<reference key="1">
    <citation type="journal article" date="2006" name="J. Bacteriol.">
        <title>Complete genome sequence of the dehalorespiring bacterium Desulfitobacterium hafniense Y51 and comparison with Dehalococcoides ethenogenes 195.</title>
        <authorList>
            <person name="Nonaka H."/>
            <person name="Keresztes G."/>
            <person name="Shinoda Y."/>
            <person name="Ikenaga Y."/>
            <person name="Abe M."/>
            <person name="Naito K."/>
            <person name="Inatomi K."/>
            <person name="Furukawa K."/>
            <person name="Inui M."/>
            <person name="Yukawa H."/>
        </authorList>
    </citation>
    <scope>NUCLEOTIDE SEQUENCE [LARGE SCALE GENOMIC DNA]</scope>
    <source>
        <strain>Y51</strain>
    </source>
</reference>
<sequence>MDIKLINIGFGNIVSANRIISIVSPESAPIKRIIQEARDAGMLIDATYGRRTRAVIICDSHHVILSAVQPETVAHRLSAKEASNTAEDPAD</sequence>
<accession>Q24TX3</accession>
<keyword id="KW-1185">Reference proteome</keyword>
<protein>
    <recommendedName>
        <fullName evidence="1">Putative regulatory protein DSY2730</fullName>
    </recommendedName>
</protein>
<name>Y2730_DESHY</name>